<accession>Q75AZ2</accession>
<reference key="1">
    <citation type="journal article" date="2004" name="Science">
        <title>The Ashbya gossypii genome as a tool for mapping the ancient Saccharomyces cerevisiae genome.</title>
        <authorList>
            <person name="Dietrich F.S."/>
            <person name="Voegeli S."/>
            <person name="Brachat S."/>
            <person name="Lerch A."/>
            <person name="Gates K."/>
            <person name="Steiner S."/>
            <person name="Mohr C."/>
            <person name="Poehlmann R."/>
            <person name="Luedi P."/>
            <person name="Choi S."/>
            <person name="Wing R.A."/>
            <person name="Flavier A."/>
            <person name="Gaffney T.D."/>
            <person name="Philippsen P."/>
        </authorList>
    </citation>
    <scope>NUCLEOTIDE SEQUENCE [LARGE SCALE GENOMIC DNA]</scope>
    <source>
        <strain>ATCC 10895 / CBS 109.51 / FGSC 9923 / NRRL Y-1056</strain>
    </source>
</reference>
<reference key="2">
    <citation type="journal article" date="2013" name="G3 (Bethesda)">
        <title>Genomes of Ashbya fungi isolated from insects reveal four mating-type loci, numerous translocations, lack of transposons, and distinct gene duplications.</title>
        <authorList>
            <person name="Dietrich F.S."/>
            <person name="Voegeli S."/>
            <person name="Kuo S."/>
            <person name="Philippsen P."/>
        </authorList>
    </citation>
    <scope>GENOME REANNOTATION</scope>
    <source>
        <strain>ATCC 10895 / CBS 109.51 / FGSC 9923 / NRRL Y-1056</strain>
    </source>
</reference>
<proteinExistence type="inferred from homology"/>
<gene>
    <name type="primary">FYV10</name>
    <name type="ordered locus">ADL222W</name>
</gene>
<sequence>MSVMNEPTVDFHLKLNEQQFHIPNELLKRNLKQCQKLIDKEATALEKSFEELDRLVRNPQNDESSMALLNEIIQKVERLERKLTKRVNVELQLLQRIDARIKYYQQLDQIKQSGDRNRLLEWYQSYTNLLISDYLTRNSMYEGEDDISCSSTPPPARLKRKLSSASSQLTTATSNNDPDRSHVNPGVEYLKQQGLDLLLDYDILLTTNRISKQLTINHELGPLLDWIKENATYLKHTSSMLEFEARFQEYIEYVKVEDYSKAITCFQTHLVKFLYSNPLDLQQAAGLLVFIKACKSNISSYVPTPRHEEIVKQQTLLQSKEDFWSFFFLKLPKSSKKDHKTNIEVKNNELAASVDIKRYMELLDDRRWEKLNEMFLKAYYSMYGISYHDPLLIYLSLGISSLKTKDCLHERRAFVSPNNELSEFLSSEVLRNACPVCSPEFAPIAQKLPYAHQVQSRLFENPVMLPSGNVYDAEKLKALAQTLRKRKLVVMGEDEVLDPIAGHTYALTDFITMYPT</sequence>
<keyword id="KW-0963">Cytoplasm</keyword>
<keyword id="KW-0479">Metal-binding</keyword>
<keyword id="KW-0539">Nucleus</keyword>
<keyword id="KW-1185">Reference proteome</keyword>
<keyword id="KW-0862">Zinc</keyword>
<keyword id="KW-0863">Zinc-finger</keyword>
<dbReference type="EMBL" id="AE016817">
    <property type="protein sequence ID" value="AAS51698.1"/>
    <property type="molecule type" value="Genomic_DNA"/>
</dbReference>
<dbReference type="RefSeq" id="NP_983874.1">
    <property type="nucleotide sequence ID" value="NM_209227.1"/>
</dbReference>
<dbReference type="SMR" id="Q75AZ2"/>
<dbReference type="FunCoup" id="Q75AZ2">
    <property type="interactions" value="952"/>
</dbReference>
<dbReference type="STRING" id="284811.Q75AZ2"/>
<dbReference type="EnsemblFungi" id="AAS51698">
    <property type="protein sequence ID" value="AAS51698"/>
    <property type="gene ID" value="AGOS_ADL222W"/>
</dbReference>
<dbReference type="GeneID" id="4620014"/>
<dbReference type="KEGG" id="ago:AGOS_ADL222W"/>
<dbReference type="eggNOG" id="KOG0396">
    <property type="taxonomic scope" value="Eukaryota"/>
</dbReference>
<dbReference type="HOGENOM" id="CLU_027445_2_0_1"/>
<dbReference type="InParanoid" id="Q75AZ2"/>
<dbReference type="OMA" id="ANHETAR"/>
<dbReference type="OrthoDB" id="1933455at2759"/>
<dbReference type="Proteomes" id="UP000000591">
    <property type="component" value="Chromosome IV"/>
</dbReference>
<dbReference type="GO" id="GO:0005737">
    <property type="term" value="C:cytoplasm"/>
    <property type="evidence" value="ECO:0000318"/>
    <property type="project" value="GO_Central"/>
</dbReference>
<dbReference type="GO" id="GO:0034657">
    <property type="term" value="C:GID complex"/>
    <property type="evidence" value="ECO:0000318"/>
    <property type="project" value="GO_Central"/>
</dbReference>
<dbReference type="GO" id="GO:0005634">
    <property type="term" value="C:nucleus"/>
    <property type="evidence" value="ECO:0000318"/>
    <property type="project" value="GO_Central"/>
</dbReference>
<dbReference type="GO" id="GO:0061630">
    <property type="term" value="F:ubiquitin protein ligase activity"/>
    <property type="evidence" value="ECO:0007669"/>
    <property type="project" value="EnsemblFungi"/>
</dbReference>
<dbReference type="GO" id="GO:0008270">
    <property type="term" value="F:zinc ion binding"/>
    <property type="evidence" value="ECO:0007669"/>
    <property type="project" value="UniProtKB-KW"/>
</dbReference>
<dbReference type="GO" id="GO:0043066">
    <property type="term" value="P:negative regulation of apoptotic process"/>
    <property type="evidence" value="ECO:0007669"/>
    <property type="project" value="EnsemblFungi"/>
</dbReference>
<dbReference type="GO" id="GO:0045721">
    <property type="term" value="P:negative regulation of gluconeogenesis"/>
    <property type="evidence" value="ECO:0007669"/>
    <property type="project" value="EnsemblFungi"/>
</dbReference>
<dbReference type="GO" id="GO:0043161">
    <property type="term" value="P:proteasome-mediated ubiquitin-dependent protein catabolic process"/>
    <property type="evidence" value="ECO:0000318"/>
    <property type="project" value="GO_Central"/>
</dbReference>
<dbReference type="InterPro" id="IPR024964">
    <property type="entry name" value="CTLH/CRA"/>
</dbReference>
<dbReference type="InterPro" id="IPR006595">
    <property type="entry name" value="CTLH_C"/>
</dbReference>
<dbReference type="InterPro" id="IPR045098">
    <property type="entry name" value="Fyv10_fam"/>
</dbReference>
<dbReference type="InterPro" id="IPR044063">
    <property type="entry name" value="ZF_RING_GID"/>
</dbReference>
<dbReference type="PANTHER" id="PTHR12170:SF2">
    <property type="entry name" value="E3 UBIQUITIN-PROTEIN TRANSFERASE MAEA"/>
    <property type="match status" value="1"/>
</dbReference>
<dbReference type="PANTHER" id="PTHR12170">
    <property type="entry name" value="MACROPHAGE ERYTHROBLAST ATTACHER-RELATED"/>
    <property type="match status" value="1"/>
</dbReference>
<dbReference type="Pfam" id="PF10607">
    <property type="entry name" value="CTLH"/>
    <property type="match status" value="1"/>
</dbReference>
<dbReference type="PROSITE" id="PS50897">
    <property type="entry name" value="CTLH"/>
    <property type="match status" value="1"/>
</dbReference>
<dbReference type="PROSITE" id="PS51867">
    <property type="entry name" value="ZF_RING_GID"/>
    <property type="match status" value="1"/>
</dbReference>
<organism>
    <name type="scientific">Eremothecium gossypii (strain ATCC 10895 / CBS 109.51 / FGSC 9923 / NRRL Y-1056)</name>
    <name type="common">Yeast</name>
    <name type="synonym">Ashbya gossypii</name>
    <dbReference type="NCBI Taxonomy" id="284811"/>
    <lineage>
        <taxon>Eukaryota</taxon>
        <taxon>Fungi</taxon>
        <taxon>Dikarya</taxon>
        <taxon>Ascomycota</taxon>
        <taxon>Saccharomycotina</taxon>
        <taxon>Saccharomycetes</taxon>
        <taxon>Saccharomycetales</taxon>
        <taxon>Saccharomycetaceae</taxon>
        <taxon>Eremothecium</taxon>
    </lineage>
</organism>
<name>FYV10_EREGS</name>
<evidence type="ECO:0000250" key="1"/>
<evidence type="ECO:0000255" key="2">
    <source>
        <dbReference type="PROSITE-ProRule" id="PRU00058"/>
    </source>
</evidence>
<evidence type="ECO:0000255" key="3">
    <source>
        <dbReference type="PROSITE-ProRule" id="PRU01215"/>
    </source>
</evidence>
<evidence type="ECO:0000256" key="4">
    <source>
        <dbReference type="SAM" id="MobiDB-lite"/>
    </source>
</evidence>
<evidence type="ECO:0000305" key="5"/>
<feature type="chain" id="PRO_0000292449" description="Protein FYV10">
    <location>
        <begin position="1"/>
        <end position="516"/>
    </location>
</feature>
<feature type="domain" description="CTLH" evidence="2">
    <location>
        <begin position="203"/>
        <end position="261"/>
    </location>
</feature>
<feature type="zinc finger region" description="RING-Gid-type" evidence="3">
    <location>
        <begin position="434"/>
        <end position="501"/>
    </location>
</feature>
<feature type="region of interest" description="Disordered" evidence="4">
    <location>
        <begin position="143"/>
        <end position="185"/>
    </location>
</feature>
<feature type="compositionally biased region" description="Low complexity" evidence="4">
    <location>
        <begin position="163"/>
        <end position="174"/>
    </location>
</feature>
<comment type="function">
    <text evidence="1">Involved in the proteasome-dependent degradation of fructose-1,6-bisphosphatase.</text>
</comment>
<comment type="subcellular location">
    <subcellularLocation>
        <location evidence="1">Cytoplasm</location>
    </subcellularLocation>
    <subcellularLocation>
        <location evidence="1">Nucleus</location>
    </subcellularLocation>
</comment>
<comment type="similarity">
    <text evidence="5">Belongs to the FYV10 family.</text>
</comment>
<protein>
    <recommendedName>
        <fullName>Protein FYV10</fullName>
    </recommendedName>
</protein>